<reference key="1">
    <citation type="journal article" date="2004" name="Nat. Genet.">
        <title>Evidence in the Legionella pneumophila genome for exploitation of host cell functions and high genome plasticity.</title>
        <authorList>
            <person name="Cazalet C."/>
            <person name="Rusniok C."/>
            <person name="Brueggemann H."/>
            <person name="Zidane N."/>
            <person name="Magnier A."/>
            <person name="Ma L."/>
            <person name="Tichit M."/>
            <person name="Jarraud S."/>
            <person name="Bouchier C."/>
            <person name="Vandenesch F."/>
            <person name="Kunst F."/>
            <person name="Etienne J."/>
            <person name="Glaser P."/>
            <person name="Buchrieser C."/>
        </authorList>
    </citation>
    <scope>NUCLEOTIDE SEQUENCE [LARGE SCALE GENOMIC DNA]</scope>
    <source>
        <strain>Lens</strain>
    </source>
</reference>
<gene>
    <name evidence="1" type="primary">nuoH</name>
    <name type="ordered locus">lpl2698</name>
</gene>
<sequence>MLHTIGILIWIIIKIIVIVVPLLISVAYLTYAERKVIGYIQVRIGPNRVGLKGLLQPFADLLKLITKEIIVPTRSNKYLFVIAPLFALVPSLVGWAVIPFQEGVVLANINAGVLYLFAMSSLGVYGVLIAGWASNSKYAMFGALRSTAQTVSYEIAMGFALVGVLLAAGSMNLTDIVNSQKGGMLHWWFIPLLPLFLVFWISGIAETNRAPFDLAEGESEIVAGFHVEYSGIGFALFFLSEYASMILISTVLAILFMGGWLSPFEGITFLDQIFFIVPGFVWLLLKISFFLFVYLWVRATFPRYRYDQLMRLGWKVLIPVTIVWLIVTAVMVVAHVKPWF</sequence>
<comment type="function">
    <text evidence="1">NDH-1 shuttles electrons from NADH, via FMN and iron-sulfur (Fe-S) centers, to quinones in the respiratory chain. The immediate electron acceptor for the enzyme in this species is believed to be ubiquinone. Couples the redox reaction to proton translocation (for every two electrons transferred, four hydrogen ions are translocated across the cytoplasmic membrane), and thus conserves the redox energy in a proton gradient. This subunit may bind ubiquinone.</text>
</comment>
<comment type="catalytic activity">
    <reaction evidence="1">
        <text>a quinone + NADH + 5 H(+)(in) = a quinol + NAD(+) + 4 H(+)(out)</text>
        <dbReference type="Rhea" id="RHEA:57888"/>
        <dbReference type="ChEBI" id="CHEBI:15378"/>
        <dbReference type="ChEBI" id="CHEBI:24646"/>
        <dbReference type="ChEBI" id="CHEBI:57540"/>
        <dbReference type="ChEBI" id="CHEBI:57945"/>
        <dbReference type="ChEBI" id="CHEBI:132124"/>
    </reaction>
</comment>
<comment type="subunit">
    <text evidence="1">NDH-1 is composed of 14 different subunits. Subunits NuoA, H, J, K, L, M, N constitute the membrane sector of the complex.</text>
</comment>
<comment type="subcellular location">
    <subcellularLocation>
        <location evidence="1">Cell inner membrane</location>
        <topology evidence="1">Multi-pass membrane protein</topology>
    </subcellularLocation>
</comment>
<comment type="similarity">
    <text evidence="1">Belongs to the complex I subunit 1 family.</text>
</comment>
<feature type="chain" id="PRO_0000240081" description="NADH-quinone oxidoreductase subunit H">
    <location>
        <begin position="1"/>
        <end position="340"/>
    </location>
</feature>
<feature type="transmembrane region" description="Helical" evidence="1">
    <location>
        <begin position="4"/>
        <end position="24"/>
    </location>
</feature>
<feature type="transmembrane region" description="Helical" evidence="1">
    <location>
        <begin position="78"/>
        <end position="98"/>
    </location>
</feature>
<feature type="transmembrane region" description="Helical" evidence="1">
    <location>
        <begin position="113"/>
        <end position="133"/>
    </location>
</feature>
<feature type="transmembrane region" description="Helical" evidence="1">
    <location>
        <begin position="151"/>
        <end position="171"/>
    </location>
</feature>
<feature type="transmembrane region" description="Helical" evidence="1">
    <location>
        <begin position="184"/>
        <end position="204"/>
    </location>
</feature>
<feature type="transmembrane region" description="Helical" evidence="1">
    <location>
        <begin position="244"/>
        <end position="264"/>
    </location>
</feature>
<feature type="transmembrane region" description="Helical" evidence="1">
    <location>
        <begin position="273"/>
        <end position="293"/>
    </location>
</feature>
<feature type="transmembrane region" description="Helical" evidence="1">
    <location>
        <begin position="316"/>
        <end position="336"/>
    </location>
</feature>
<proteinExistence type="inferred from homology"/>
<dbReference type="EC" id="7.1.1.-" evidence="1"/>
<dbReference type="EMBL" id="CR628337">
    <property type="protein sequence ID" value="CAH16939.1"/>
    <property type="molecule type" value="Genomic_DNA"/>
</dbReference>
<dbReference type="RefSeq" id="WP_011216627.1">
    <property type="nucleotide sequence ID" value="NC_006369.1"/>
</dbReference>
<dbReference type="SMR" id="Q5WT27"/>
<dbReference type="KEGG" id="lpf:lpl2698"/>
<dbReference type="LegioList" id="lpl2698"/>
<dbReference type="HOGENOM" id="CLU_015134_0_1_6"/>
<dbReference type="Proteomes" id="UP000002517">
    <property type="component" value="Chromosome"/>
</dbReference>
<dbReference type="GO" id="GO:0005886">
    <property type="term" value="C:plasma membrane"/>
    <property type="evidence" value="ECO:0007669"/>
    <property type="project" value="UniProtKB-SubCell"/>
</dbReference>
<dbReference type="GO" id="GO:0003954">
    <property type="term" value="F:NADH dehydrogenase activity"/>
    <property type="evidence" value="ECO:0007669"/>
    <property type="project" value="TreeGrafter"/>
</dbReference>
<dbReference type="GO" id="GO:0016655">
    <property type="term" value="F:oxidoreductase activity, acting on NAD(P)H, quinone or similar compound as acceptor"/>
    <property type="evidence" value="ECO:0007669"/>
    <property type="project" value="UniProtKB-UniRule"/>
</dbReference>
<dbReference type="GO" id="GO:0048038">
    <property type="term" value="F:quinone binding"/>
    <property type="evidence" value="ECO:0007669"/>
    <property type="project" value="UniProtKB-KW"/>
</dbReference>
<dbReference type="GO" id="GO:0009060">
    <property type="term" value="P:aerobic respiration"/>
    <property type="evidence" value="ECO:0007669"/>
    <property type="project" value="TreeGrafter"/>
</dbReference>
<dbReference type="HAMAP" id="MF_01350">
    <property type="entry name" value="NDH1_NuoH"/>
    <property type="match status" value="1"/>
</dbReference>
<dbReference type="InterPro" id="IPR001694">
    <property type="entry name" value="NADH_UbQ_OxRdtase_su1/FPO"/>
</dbReference>
<dbReference type="InterPro" id="IPR018086">
    <property type="entry name" value="NADH_UbQ_OxRdtase_su1_CS"/>
</dbReference>
<dbReference type="NCBIfam" id="NF004741">
    <property type="entry name" value="PRK06076.1-2"/>
    <property type="match status" value="1"/>
</dbReference>
<dbReference type="PANTHER" id="PTHR11432">
    <property type="entry name" value="NADH DEHYDROGENASE SUBUNIT 1"/>
    <property type="match status" value="1"/>
</dbReference>
<dbReference type="PANTHER" id="PTHR11432:SF3">
    <property type="entry name" value="NADH-UBIQUINONE OXIDOREDUCTASE CHAIN 1"/>
    <property type="match status" value="1"/>
</dbReference>
<dbReference type="Pfam" id="PF00146">
    <property type="entry name" value="NADHdh"/>
    <property type="match status" value="1"/>
</dbReference>
<dbReference type="PROSITE" id="PS00668">
    <property type="entry name" value="COMPLEX1_ND1_2"/>
    <property type="match status" value="1"/>
</dbReference>
<name>NUOH_LEGPL</name>
<keyword id="KW-0997">Cell inner membrane</keyword>
<keyword id="KW-1003">Cell membrane</keyword>
<keyword id="KW-0472">Membrane</keyword>
<keyword id="KW-0520">NAD</keyword>
<keyword id="KW-0874">Quinone</keyword>
<keyword id="KW-1278">Translocase</keyword>
<keyword id="KW-0812">Transmembrane</keyword>
<keyword id="KW-1133">Transmembrane helix</keyword>
<keyword id="KW-0830">Ubiquinone</keyword>
<accession>Q5WT27</accession>
<organism>
    <name type="scientific">Legionella pneumophila (strain Lens)</name>
    <dbReference type="NCBI Taxonomy" id="297245"/>
    <lineage>
        <taxon>Bacteria</taxon>
        <taxon>Pseudomonadati</taxon>
        <taxon>Pseudomonadota</taxon>
        <taxon>Gammaproteobacteria</taxon>
        <taxon>Legionellales</taxon>
        <taxon>Legionellaceae</taxon>
        <taxon>Legionella</taxon>
    </lineage>
</organism>
<protein>
    <recommendedName>
        <fullName evidence="1">NADH-quinone oxidoreductase subunit H</fullName>
        <ecNumber evidence="1">7.1.1.-</ecNumber>
    </recommendedName>
    <alternativeName>
        <fullName evidence="1">NADH dehydrogenase I subunit H</fullName>
    </alternativeName>
    <alternativeName>
        <fullName evidence="1">NDH-1 subunit H</fullName>
    </alternativeName>
</protein>
<evidence type="ECO:0000255" key="1">
    <source>
        <dbReference type="HAMAP-Rule" id="MF_01350"/>
    </source>
</evidence>